<accession>Q87N46</accession>
<feature type="chain" id="PRO_0000105074" description="Integration host factor subunit beta">
    <location>
        <begin position="1"/>
        <end position="93"/>
    </location>
</feature>
<proteinExistence type="inferred from homology"/>
<name>IHFB_VIBPA</name>
<gene>
    <name evidence="1" type="primary">ihfB</name>
    <name evidence="1" type="synonym">himD</name>
    <name type="ordered locus">VP2029</name>
</gene>
<reference key="1">
    <citation type="journal article" date="2003" name="Lancet">
        <title>Genome sequence of Vibrio parahaemolyticus: a pathogenic mechanism distinct from that of V. cholerae.</title>
        <authorList>
            <person name="Makino K."/>
            <person name="Oshima K."/>
            <person name="Kurokawa K."/>
            <person name="Yokoyama K."/>
            <person name="Uda T."/>
            <person name="Tagomori K."/>
            <person name="Iijima Y."/>
            <person name="Najima M."/>
            <person name="Nakano M."/>
            <person name="Yamashita A."/>
            <person name="Kubota Y."/>
            <person name="Kimura S."/>
            <person name="Yasunaga T."/>
            <person name="Honda T."/>
            <person name="Shinagawa H."/>
            <person name="Hattori M."/>
            <person name="Iida T."/>
        </authorList>
    </citation>
    <scope>NUCLEOTIDE SEQUENCE [LARGE SCALE GENOMIC DNA]</scope>
    <source>
        <strain>RIMD 2210633</strain>
    </source>
</reference>
<protein>
    <recommendedName>
        <fullName evidence="1">Integration host factor subunit beta</fullName>
        <shortName evidence="1">IHF-beta</shortName>
    </recommendedName>
</protein>
<evidence type="ECO:0000255" key="1">
    <source>
        <dbReference type="HAMAP-Rule" id="MF_00381"/>
    </source>
</evidence>
<sequence length="93" mass="10592">MTKSELIERLCAEQTHLSAKEVEDAVKDILEHMASTLESGDRIEIRGFGSFSLHYREPRVGRNPKTGDKVELEGKYVPHFKPGKELRERVNLG</sequence>
<comment type="function">
    <text evidence="1">This protein is one of the two subunits of integration host factor, a specific DNA-binding protein that functions in genetic recombination as well as in transcriptional and translational control.</text>
</comment>
<comment type="subunit">
    <text evidence="1">Heterodimer of an alpha and a beta chain.</text>
</comment>
<comment type="similarity">
    <text evidence="1">Belongs to the bacterial histone-like protein family.</text>
</comment>
<dbReference type="EMBL" id="BA000031">
    <property type="protein sequence ID" value="BAC60292.1"/>
    <property type="molecule type" value="Genomic_DNA"/>
</dbReference>
<dbReference type="RefSeq" id="NP_798408.1">
    <property type="nucleotide sequence ID" value="NC_004603.1"/>
</dbReference>
<dbReference type="RefSeq" id="WP_005491075.1">
    <property type="nucleotide sequence ID" value="NC_004603.1"/>
</dbReference>
<dbReference type="SMR" id="Q87N46"/>
<dbReference type="GeneID" id="1189540"/>
<dbReference type="KEGG" id="vpa:VP2029"/>
<dbReference type="PATRIC" id="fig|223926.6.peg.1940"/>
<dbReference type="eggNOG" id="COG0776">
    <property type="taxonomic scope" value="Bacteria"/>
</dbReference>
<dbReference type="HOGENOM" id="CLU_105066_2_0_6"/>
<dbReference type="Proteomes" id="UP000002493">
    <property type="component" value="Chromosome 1"/>
</dbReference>
<dbReference type="GO" id="GO:0005694">
    <property type="term" value="C:chromosome"/>
    <property type="evidence" value="ECO:0007669"/>
    <property type="project" value="InterPro"/>
</dbReference>
<dbReference type="GO" id="GO:0005829">
    <property type="term" value="C:cytosol"/>
    <property type="evidence" value="ECO:0007669"/>
    <property type="project" value="TreeGrafter"/>
</dbReference>
<dbReference type="GO" id="GO:0003677">
    <property type="term" value="F:DNA binding"/>
    <property type="evidence" value="ECO:0007669"/>
    <property type="project" value="UniProtKB-UniRule"/>
</dbReference>
<dbReference type="GO" id="GO:0030527">
    <property type="term" value="F:structural constituent of chromatin"/>
    <property type="evidence" value="ECO:0007669"/>
    <property type="project" value="InterPro"/>
</dbReference>
<dbReference type="GO" id="GO:0006310">
    <property type="term" value="P:DNA recombination"/>
    <property type="evidence" value="ECO:0007669"/>
    <property type="project" value="UniProtKB-UniRule"/>
</dbReference>
<dbReference type="GO" id="GO:0006355">
    <property type="term" value="P:regulation of DNA-templated transcription"/>
    <property type="evidence" value="ECO:0007669"/>
    <property type="project" value="UniProtKB-UniRule"/>
</dbReference>
<dbReference type="GO" id="GO:0006417">
    <property type="term" value="P:regulation of translation"/>
    <property type="evidence" value="ECO:0007669"/>
    <property type="project" value="UniProtKB-UniRule"/>
</dbReference>
<dbReference type="CDD" id="cd13836">
    <property type="entry name" value="IHF_B"/>
    <property type="match status" value="1"/>
</dbReference>
<dbReference type="FunFam" id="4.10.520.10:FF:000003">
    <property type="entry name" value="Integration host factor subunit beta"/>
    <property type="match status" value="1"/>
</dbReference>
<dbReference type="Gene3D" id="4.10.520.10">
    <property type="entry name" value="IHF-like DNA-binding proteins"/>
    <property type="match status" value="1"/>
</dbReference>
<dbReference type="HAMAP" id="MF_00381">
    <property type="entry name" value="IHF_beta"/>
    <property type="match status" value="1"/>
</dbReference>
<dbReference type="InterPro" id="IPR000119">
    <property type="entry name" value="Hist_DNA-bd"/>
</dbReference>
<dbReference type="InterPro" id="IPR020816">
    <property type="entry name" value="Histone-like_DNA-bd_CS"/>
</dbReference>
<dbReference type="InterPro" id="IPR010992">
    <property type="entry name" value="IHF-like_DNA-bd_dom_sf"/>
</dbReference>
<dbReference type="InterPro" id="IPR005685">
    <property type="entry name" value="IHF_beta"/>
</dbReference>
<dbReference type="NCBIfam" id="TIGR00988">
    <property type="entry name" value="hip"/>
    <property type="match status" value="1"/>
</dbReference>
<dbReference type="NCBIfam" id="NF001222">
    <property type="entry name" value="PRK00199.1"/>
    <property type="match status" value="1"/>
</dbReference>
<dbReference type="PANTHER" id="PTHR33175">
    <property type="entry name" value="DNA-BINDING PROTEIN HU"/>
    <property type="match status" value="1"/>
</dbReference>
<dbReference type="PANTHER" id="PTHR33175:SF5">
    <property type="entry name" value="INTEGRATION HOST FACTOR SUBUNIT BETA"/>
    <property type="match status" value="1"/>
</dbReference>
<dbReference type="Pfam" id="PF00216">
    <property type="entry name" value="Bac_DNA_binding"/>
    <property type="match status" value="1"/>
</dbReference>
<dbReference type="PRINTS" id="PR01727">
    <property type="entry name" value="DNABINDINGHU"/>
</dbReference>
<dbReference type="SMART" id="SM00411">
    <property type="entry name" value="BHL"/>
    <property type="match status" value="1"/>
</dbReference>
<dbReference type="SUPFAM" id="SSF47729">
    <property type="entry name" value="IHF-like DNA-binding proteins"/>
    <property type="match status" value="1"/>
</dbReference>
<dbReference type="PROSITE" id="PS00045">
    <property type="entry name" value="HISTONE_LIKE"/>
    <property type="match status" value="1"/>
</dbReference>
<keyword id="KW-0233">DNA recombination</keyword>
<keyword id="KW-0238">DNA-binding</keyword>
<keyword id="KW-0804">Transcription</keyword>
<keyword id="KW-0805">Transcription regulation</keyword>
<keyword id="KW-0810">Translation regulation</keyword>
<organism>
    <name type="scientific">Vibrio parahaemolyticus serotype O3:K6 (strain RIMD 2210633)</name>
    <dbReference type="NCBI Taxonomy" id="223926"/>
    <lineage>
        <taxon>Bacteria</taxon>
        <taxon>Pseudomonadati</taxon>
        <taxon>Pseudomonadota</taxon>
        <taxon>Gammaproteobacteria</taxon>
        <taxon>Vibrionales</taxon>
        <taxon>Vibrionaceae</taxon>
        <taxon>Vibrio</taxon>
    </lineage>
</organism>